<dbReference type="EC" id="6.1.1.17" evidence="1"/>
<dbReference type="EMBL" id="AP006716">
    <property type="protein sequence ID" value="BAE05790.1"/>
    <property type="molecule type" value="Genomic_DNA"/>
</dbReference>
<dbReference type="RefSeq" id="WP_011276733.1">
    <property type="nucleotide sequence ID" value="NC_007168.1"/>
</dbReference>
<dbReference type="SMR" id="Q4L3I7"/>
<dbReference type="KEGG" id="sha:SH2481"/>
<dbReference type="eggNOG" id="COG0008">
    <property type="taxonomic scope" value="Bacteria"/>
</dbReference>
<dbReference type="HOGENOM" id="CLU_015768_6_1_9"/>
<dbReference type="OrthoDB" id="9807503at2"/>
<dbReference type="Proteomes" id="UP000000543">
    <property type="component" value="Chromosome"/>
</dbReference>
<dbReference type="GO" id="GO:0005829">
    <property type="term" value="C:cytosol"/>
    <property type="evidence" value="ECO:0007669"/>
    <property type="project" value="TreeGrafter"/>
</dbReference>
<dbReference type="GO" id="GO:0005524">
    <property type="term" value="F:ATP binding"/>
    <property type="evidence" value="ECO:0007669"/>
    <property type="project" value="UniProtKB-UniRule"/>
</dbReference>
<dbReference type="GO" id="GO:0004818">
    <property type="term" value="F:glutamate-tRNA ligase activity"/>
    <property type="evidence" value="ECO:0007669"/>
    <property type="project" value="UniProtKB-UniRule"/>
</dbReference>
<dbReference type="GO" id="GO:0000049">
    <property type="term" value="F:tRNA binding"/>
    <property type="evidence" value="ECO:0007669"/>
    <property type="project" value="InterPro"/>
</dbReference>
<dbReference type="GO" id="GO:0008270">
    <property type="term" value="F:zinc ion binding"/>
    <property type="evidence" value="ECO:0007669"/>
    <property type="project" value="InterPro"/>
</dbReference>
<dbReference type="GO" id="GO:0006424">
    <property type="term" value="P:glutamyl-tRNA aminoacylation"/>
    <property type="evidence" value="ECO:0007669"/>
    <property type="project" value="UniProtKB-UniRule"/>
</dbReference>
<dbReference type="CDD" id="cd00808">
    <property type="entry name" value="GluRS_core"/>
    <property type="match status" value="1"/>
</dbReference>
<dbReference type="FunFam" id="1.10.10.350:FF:000002">
    <property type="entry name" value="Glutamate--tRNA ligase"/>
    <property type="match status" value="1"/>
</dbReference>
<dbReference type="FunFam" id="3.40.50.620:FF:000007">
    <property type="entry name" value="Glutamate--tRNA ligase"/>
    <property type="match status" value="1"/>
</dbReference>
<dbReference type="Gene3D" id="1.10.10.350">
    <property type="match status" value="1"/>
</dbReference>
<dbReference type="Gene3D" id="3.40.50.620">
    <property type="entry name" value="HUPs"/>
    <property type="match status" value="1"/>
</dbReference>
<dbReference type="HAMAP" id="MF_00022">
    <property type="entry name" value="Glu_tRNA_synth_type1"/>
    <property type="match status" value="1"/>
</dbReference>
<dbReference type="InterPro" id="IPR045462">
    <property type="entry name" value="aa-tRNA-synth_I_cd-bd"/>
</dbReference>
<dbReference type="InterPro" id="IPR020751">
    <property type="entry name" value="aa-tRNA-synth_I_codon-bd_sub2"/>
</dbReference>
<dbReference type="InterPro" id="IPR001412">
    <property type="entry name" value="aa-tRNA-synth_I_CS"/>
</dbReference>
<dbReference type="InterPro" id="IPR008925">
    <property type="entry name" value="aa_tRNA-synth_I_cd-bd_sf"/>
</dbReference>
<dbReference type="InterPro" id="IPR004527">
    <property type="entry name" value="Glu-tRNA-ligase_bac/mito"/>
</dbReference>
<dbReference type="InterPro" id="IPR000924">
    <property type="entry name" value="Glu/Gln-tRNA-synth"/>
</dbReference>
<dbReference type="InterPro" id="IPR020058">
    <property type="entry name" value="Glu/Gln-tRNA-synth_Ib_cat-dom"/>
</dbReference>
<dbReference type="InterPro" id="IPR049940">
    <property type="entry name" value="GluQ/Sye"/>
</dbReference>
<dbReference type="InterPro" id="IPR033910">
    <property type="entry name" value="GluRS_core"/>
</dbReference>
<dbReference type="InterPro" id="IPR014729">
    <property type="entry name" value="Rossmann-like_a/b/a_fold"/>
</dbReference>
<dbReference type="NCBIfam" id="TIGR00464">
    <property type="entry name" value="gltX_bact"/>
    <property type="match status" value="1"/>
</dbReference>
<dbReference type="PANTHER" id="PTHR43311">
    <property type="entry name" value="GLUTAMATE--TRNA LIGASE"/>
    <property type="match status" value="1"/>
</dbReference>
<dbReference type="PANTHER" id="PTHR43311:SF2">
    <property type="entry name" value="GLUTAMATE--TRNA LIGASE, MITOCHONDRIAL-RELATED"/>
    <property type="match status" value="1"/>
</dbReference>
<dbReference type="Pfam" id="PF19269">
    <property type="entry name" value="Anticodon_2"/>
    <property type="match status" value="1"/>
</dbReference>
<dbReference type="Pfam" id="PF00749">
    <property type="entry name" value="tRNA-synt_1c"/>
    <property type="match status" value="1"/>
</dbReference>
<dbReference type="PRINTS" id="PR00987">
    <property type="entry name" value="TRNASYNTHGLU"/>
</dbReference>
<dbReference type="SUPFAM" id="SSF48163">
    <property type="entry name" value="An anticodon-binding domain of class I aminoacyl-tRNA synthetases"/>
    <property type="match status" value="1"/>
</dbReference>
<dbReference type="SUPFAM" id="SSF52374">
    <property type="entry name" value="Nucleotidylyl transferase"/>
    <property type="match status" value="1"/>
</dbReference>
<dbReference type="PROSITE" id="PS00178">
    <property type="entry name" value="AA_TRNA_LIGASE_I"/>
    <property type="match status" value="1"/>
</dbReference>
<comment type="function">
    <text evidence="1">Catalyzes the attachment of glutamate to tRNA(Glu) in a two-step reaction: glutamate is first activated by ATP to form Glu-AMP and then transferred to the acceptor end of tRNA(Glu).</text>
</comment>
<comment type="catalytic activity">
    <reaction evidence="1">
        <text>tRNA(Glu) + L-glutamate + ATP = L-glutamyl-tRNA(Glu) + AMP + diphosphate</text>
        <dbReference type="Rhea" id="RHEA:23540"/>
        <dbReference type="Rhea" id="RHEA-COMP:9663"/>
        <dbReference type="Rhea" id="RHEA-COMP:9680"/>
        <dbReference type="ChEBI" id="CHEBI:29985"/>
        <dbReference type="ChEBI" id="CHEBI:30616"/>
        <dbReference type="ChEBI" id="CHEBI:33019"/>
        <dbReference type="ChEBI" id="CHEBI:78442"/>
        <dbReference type="ChEBI" id="CHEBI:78520"/>
        <dbReference type="ChEBI" id="CHEBI:456215"/>
        <dbReference type="EC" id="6.1.1.17"/>
    </reaction>
</comment>
<comment type="subunit">
    <text evidence="1">Monomer.</text>
</comment>
<comment type="subcellular location">
    <subcellularLocation>
        <location evidence="1">Cytoplasm</location>
    </subcellularLocation>
</comment>
<comment type="similarity">
    <text evidence="1">Belongs to the class-I aminoacyl-tRNA synthetase family. Glutamate--tRNA ligase type 1 subfamily.</text>
</comment>
<name>SYE_STAHJ</name>
<proteinExistence type="inferred from homology"/>
<evidence type="ECO:0000255" key="1">
    <source>
        <dbReference type="HAMAP-Rule" id="MF_00022"/>
    </source>
</evidence>
<feature type="chain" id="PRO_0000237405" description="Glutamate--tRNA ligase">
    <location>
        <begin position="1"/>
        <end position="484"/>
    </location>
</feature>
<feature type="short sequence motif" description="'HIGH' region" evidence="1">
    <location>
        <begin position="11"/>
        <end position="21"/>
    </location>
</feature>
<feature type="short sequence motif" description="'KMSKS' region" evidence="1">
    <location>
        <begin position="252"/>
        <end position="256"/>
    </location>
</feature>
<feature type="binding site" evidence="1">
    <location>
        <position position="255"/>
    </location>
    <ligand>
        <name>ATP</name>
        <dbReference type="ChEBI" id="CHEBI:30616"/>
    </ligand>
</feature>
<organism>
    <name type="scientific">Staphylococcus haemolyticus (strain JCSC1435)</name>
    <dbReference type="NCBI Taxonomy" id="279808"/>
    <lineage>
        <taxon>Bacteria</taxon>
        <taxon>Bacillati</taxon>
        <taxon>Bacillota</taxon>
        <taxon>Bacilli</taxon>
        <taxon>Bacillales</taxon>
        <taxon>Staphylococcaceae</taxon>
        <taxon>Staphylococcus</taxon>
    </lineage>
</organism>
<protein>
    <recommendedName>
        <fullName evidence="1">Glutamate--tRNA ligase</fullName>
        <ecNumber evidence="1">6.1.1.17</ecNumber>
    </recommendedName>
    <alternativeName>
        <fullName evidence="1">Glutamyl-tRNA synthetase</fullName>
        <shortName evidence="1">GluRS</shortName>
    </alternativeName>
</protein>
<keyword id="KW-0030">Aminoacyl-tRNA synthetase</keyword>
<keyword id="KW-0067">ATP-binding</keyword>
<keyword id="KW-0963">Cytoplasm</keyword>
<keyword id="KW-0436">Ligase</keyword>
<keyword id="KW-0547">Nucleotide-binding</keyword>
<keyword id="KW-0648">Protein biosynthesis</keyword>
<accession>Q4L3I7</accession>
<reference key="1">
    <citation type="journal article" date="2005" name="J. Bacteriol.">
        <title>Whole-genome sequencing of Staphylococcus haemolyticus uncovers the extreme plasticity of its genome and the evolution of human-colonizing staphylococcal species.</title>
        <authorList>
            <person name="Takeuchi F."/>
            <person name="Watanabe S."/>
            <person name="Baba T."/>
            <person name="Yuzawa H."/>
            <person name="Ito T."/>
            <person name="Morimoto Y."/>
            <person name="Kuroda M."/>
            <person name="Cui L."/>
            <person name="Takahashi M."/>
            <person name="Ankai A."/>
            <person name="Baba S."/>
            <person name="Fukui S."/>
            <person name="Lee J.C."/>
            <person name="Hiramatsu K."/>
        </authorList>
    </citation>
    <scope>NUCLEOTIDE SEQUENCE [LARGE SCALE GENOMIC DNA]</scope>
    <source>
        <strain>JCSC1435</strain>
    </source>
</reference>
<sequence>MSERIRVRYAPSPTGYLHIGNARTALFNYLFAKHYDGDFVVRIEDTDSKRNLEDGESSQFDNLKWLGLDWDESIDKDKGYGPYRQSERGDIYNPLIQQLLDEDKAYKCYMTEEELEKEREDQIARGEMPRYGGQHAHLTEEERQQFEAEGRRPSIRFRVPQDQTYTFNDMVKGEISFDSNNIGDWVIVKKDGIPTYNFAVAIDDYYMGISDVIRGDDHVSNTPKQLMIYEAFGWEAPRFGHMSLIVNEERKKLSKRDGQILQFIEQYRDLGYLPEALFNFITLLGWSPEGEEEIFSKEEFIKIFDEKRLSKSPAMFDRQKLAWVNNQYMKTKDTDTVFELALPHLIKANLIPESPSEDDKEWGRKLVALYQKEMSYAGEIVPLSEMFFHEMPELGEEEQEVINGEQVPELMTHLYGKLEALEPFEAADIKKTIKEVQKETGIKGKQLFMPIRVAVTGQMHGPELPNTIEVLGKDKVLSRLKKFV</sequence>
<gene>
    <name evidence="1" type="primary">gltX</name>
    <name type="ordered locus">SH2481</name>
</gene>